<feature type="chain" id="PRO_0000214767" description="Sodium- and chloride-dependent taurine transporter">
    <location>
        <begin position="1"/>
        <end position="620"/>
    </location>
</feature>
<feature type="topological domain" description="Cytoplasmic" evidence="3">
    <location>
        <begin position="1"/>
        <end position="49"/>
    </location>
</feature>
<feature type="transmembrane region" description="Helical; Name=1" evidence="3">
    <location>
        <begin position="50"/>
        <end position="70"/>
    </location>
</feature>
<feature type="transmembrane region" description="Helical; Name=2" evidence="3">
    <location>
        <begin position="78"/>
        <end position="97"/>
    </location>
</feature>
<feature type="transmembrane region" description="Helical; Name=3" evidence="3">
    <location>
        <begin position="122"/>
        <end position="142"/>
    </location>
</feature>
<feature type="topological domain" description="Extracellular" evidence="3">
    <location>
        <begin position="143"/>
        <end position="217"/>
    </location>
</feature>
<feature type="transmembrane region" description="Helical; Name=4" evidence="3">
    <location>
        <begin position="218"/>
        <end position="236"/>
    </location>
</feature>
<feature type="transmembrane region" description="Helical; Name=5" evidence="3">
    <location>
        <begin position="245"/>
        <end position="262"/>
    </location>
</feature>
<feature type="transmembrane region" description="Helical; Name=6" evidence="3">
    <location>
        <begin position="298"/>
        <end position="315"/>
    </location>
</feature>
<feature type="transmembrane region" description="Helical; Name=7" evidence="3">
    <location>
        <begin position="327"/>
        <end position="348"/>
    </location>
</feature>
<feature type="transmembrane region" description="Helical; Name=8" evidence="3">
    <location>
        <begin position="381"/>
        <end position="400"/>
    </location>
</feature>
<feature type="transmembrane region" description="Helical; Name=9" evidence="3">
    <location>
        <begin position="430"/>
        <end position="448"/>
    </location>
</feature>
<feature type="transmembrane region" description="Helical; Name=10" evidence="3">
    <location>
        <begin position="465"/>
        <end position="485"/>
    </location>
</feature>
<feature type="transmembrane region" description="Helical; Name=11" evidence="3">
    <location>
        <begin position="506"/>
        <end position="525"/>
    </location>
</feature>
<feature type="transmembrane region" description="Helical; Name=12" evidence="3">
    <location>
        <begin position="545"/>
        <end position="563"/>
    </location>
</feature>
<feature type="topological domain" description="Cytoplasmic" evidence="3">
    <location>
        <begin position="564"/>
        <end position="620"/>
    </location>
</feature>
<feature type="region of interest" description="Disordered" evidence="4">
    <location>
        <begin position="1"/>
        <end position="42"/>
    </location>
</feature>
<feature type="compositionally biased region" description="Basic and acidic residues" evidence="4">
    <location>
        <begin position="1"/>
        <end position="18"/>
    </location>
</feature>
<feature type="compositionally biased region" description="Basic and acidic residues" evidence="4">
    <location>
        <begin position="29"/>
        <end position="42"/>
    </location>
</feature>
<feature type="modified residue" description="Phosphoserine" evidence="2">
    <location>
        <position position="322"/>
    </location>
</feature>
<feature type="glycosylation site" description="N-linked (GlcNAc...) asparagine" evidence="3">
    <location>
        <position position="163"/>
    </location>
</feature>
<feature type="glycosylation site" description="N-linked (GlcNAc...) asparagine" evidence="3">
    <location>
        <position position="179"/>
    </location>
</feature>
<feature type="glycosylation site" description="N-linked (GlcNAc...) asparagine" evidence="5">
    <location>
        <position position="190"/>
    </location>
</feature>
<feature type="splice variant" id="VSP_044961" description="In isoform 2." evidence="11">
    <location>
        <begin position="201"/>
        <end position="620"/>
    </location>
</feature>
<feature type="sequence variant" id="VAR_011767" description="In dbSNP:rs1042350.">
    <original>I</original>
    <variation>M</variation>
    <location>
        <position position="17"/>
    </location>
</feature>
<feature type="sequence variant" id="VAR_011768" description="In dbSNP:rs1042351.">
    <original>L</original>
    <variation>V</variation>
    <location>
        <position position="18"/>
    </location>
</feature>
<feature type="sequence variant" id="VAR_083336" description="In HTRDC; severely decreased taurine transport activity in patient cells; does not affect cell membrane localization; dbSNP:rs754954058." evidence="6">
    <original>A</original>
    <variation>E</variation>
    <location>
        <position position="78"/>
    </location>
</feature>
<feature type="sequence variant" id="VAR_083337" description="In HTRDC; decreased taurine transport activity; does not affect protein abundance; does not affect cell membrane localization; dbSNP:rs1700769766." evidence="7">
    <original>G</original>
    <variation>V</variation>
    <location>
        <position position="399"/>
    </location>
</feature>
<feature type="sequence conflict" description="In Ref. 2; AAA50842." evidence="12" ref="2">
    <original>T</original>
    <variation>K</variation>
    <location>
        <position position="28"/>
    </location>
</feature>
<feature type="sequence conflict" description="In Ref. 1; CAA79481." evidence="12" ref="1">
    <original>A</original>
    <variation>R</variation>
    <location>
        <position position="272"/>
    </location>
</feature>
<feature type="sequence conflict" description="In Ref. 1; CAA79481." evidence="12" ref="1">
    <location>
        <position position="509"/>
    </location>
</feature>
<feature type="sequence conflict" description="In Ref. 1; CAA79481." evidence="12" ref="1">
    <original>YPN</original>
    <variation>SPT</variation>
    <location>
        <begin position="538"/>
        <end position="540"/>
    </location>
</feature>
<gene>
    <name type="primary">SLC6A6</name>
</gene>
<proteinExistence type="evidence at protein level"/>
<name>SC6A6_HUMAN</name>
<organism>
    <name type="scientific">Homo sapiens</name>
    <name type="common">Human</name>
    <dbReference type="NCBI Taxonomy" id="9606"/>
    <lineage>
        <taxon>Eukaryota</taxon>
        <taxon>Metazoa</taxon>
        <taxon>Chordata</taxon>
        <taxon>Craniata</taxon>
        <taxon>Vertebrata</taxon>
        <taxon>Euteleostomi</taxon>
        <taxon>Mammalia</taxon>
        <taxon>Eutheria</taxon>
        <taxon>Euarchontoglires</taxon>
        <taxon>Primates</taxon>
        <taxon>Haplorrhini</taxon>
        <taxon>Catarrhini</taxon>
        <taxon>Hominidae</taxon>
        <taxon>Homo</taxon>
    </lineage>
</organism>
<reference key="1">
    <citation type="journal article" date="1993" name="FEBS Lett.">
        <title>Cloning of the human taurine transporter and characterization of taurine uptake in thyroid cells.</title>
        <authorList>
            <person name="Jhiang S.M."/>
            <person name="Fithian L."/>
            <person name="Smanik P."/>
            <person name="McGill J."/>
            <person name="Tong Q."/>
            <person name="Mazzaferri E.L."/>
        </authorList>
    </citation>
    <scope>NUCLEOTIDE SEQUENCE [MRNA] (ISOFORM 1)</scope>
    <scope>FUNCTION</scope>
    <scope>TISSUE SPECIFICITY</scope>
    <scope>TRANSPORTER ACTIVITY</scope>
    <scope>ACTIVITY REGULATION</scope>
    <source>
        <tissue>Thyroid</tissue>
    </source>
</reference>
<reference key="2">
    <citation type="journal article" date="1994" name="Biochem. J.">
        <title>Functional characterization and chromosomal localization of a cloned taurine transporter from human placenta.</title>
        <authorList>
            <person name="Ramamoorthy S."/>
            <person name="Leibach F.H."/>
            <person name="Mahesh V.B."/>
            <person name="Han H."/>
            <person name="Yang-Feng T."/>
            <person name="Blakely R.D."/>
            <person name="Ganapathy V."/>
        </authorList>
    </citation>
    <scope>NUCLEOTIDE SEQUENCE [MRNA] (ISOFORM 1)</scope>
    <scope>FUNCTION</scope>
    <scope>TRANSPORTER ACTIVITY</scope>
    <scope>BIOPHYSICOCHEMICAL PROPERTIES</scope>
    <scope>TISSUE SPECIFICITY</scope>
    <scope>ACTIVITY REGULATION</scope>
    <source>
        <tissue>Placenta</tissue>
    </source>
</reference>
<reference key="3">
    <citation type="journal article" date="1996" name="Curr. Eye Res.">
        <title>Isolation of a cDNA encoding a taurine transporter in the human retinal pigment epithelium.</title>
        <authorList>
            <person name="Miyamoto Y."/>
            <person name="Liou G.I."/>
            <person name="Sprinkle T.J."/>
        </authorList>
    </citation>
    <scope>NUCLEOTIDE SEQUENCE [MRNA] (ISOFORM 1)</scope>
    <scope>FUNCTION</scope>
    <scope>TRANSPORTER ACTIVITY</scope>
    <scope>BIOPHYSICOCHEMICAL PROPERTIES</scope>
    <scope>ACTIVITY REGULATION</scope>
    <source>
        <tissue>Retinal pigment epithelium</tissue>
    </source>
</reference>
<reference key="4">
    <citation type="journal article" date="2006" name="Nature">
        <title>The DNA sequence, annotation and analysis of human chromosome 3.</title>
        <authorList>
            <person name="Muzny D.M."/>
            <person name="Scherer S.E."/>
            <person name="Kaul R."/>
            <person name="Wang J."/>
            <person name="Yu J."/>
            <person name="Sudbrak R."/>
            <person name="Buhay C.J."/>
            <person name="Chen R."/>
            <person name="Cree A."/>
            <person name="Ding Y."/>
            <person name="Dugan-Rocha S."/>
            <person name="Gill R."/>
            <person name="Gunaratne P."/>
            <person name="Harris R.A."/>
            <person name="Hawes A.C."/>
            <person name="Hernandez J."/>
            <person name="Hodgson A.V."/>
            <person name="Hume J."/>
            <person name="Jackson A."/>
            <person name="Khan Z.M."/>
            <person name="Kovar-Smith C."/>
            <person name="Lewis L.R."/>
            <person name="Lozado R.J."/>
            <person name="Metzker M.L."/>
            <person name="Milosavljevic A."/>
            <person name="Miner G.R."/>
            <person name="Morgan M.B."/>
            <person name="Nazareth L.V."/>
            <person name="Scott G."/>
            <person name="Sodergren E."/>
            <person name="Song X.-Z."/>
            <person name="Steffen D."/>
            <person name="Wei S."/>
            <person name="Wheeler D.A."/>
            <person name="Wright M.W."/>
            <person name="Worley K.C."/>
            <person name="Yuan Y."/>
            <person name="Zhang Z."/>
            <person name="Adams C.Q."/>
            <person name="Ansari-Lari M.A."/>
            <person name="Ayele M."/>
            <person name="Brown M.J."/>
            <person name="Chen G."/>
            <person name="Chen Z."/>
            <person name="Clendenning J."/>
            <person name="Clerc-Blankenburg K.P."/>
            <person name="Chen R."/>
            <person name="Chen Z."/>
            <person name="Davis C."/>
            <person name="Delgado O."/>
            <person name="Dinh H.H."/>
            <person name="Dong W."/>
            <person name="Draper H."/>
            <person name="Ernst S."/>
            <person name="Fu G."/>
            <person name="Gonzalez-Garay M.L."/>
            <person name="Garcia D.K."/>
            <person name="Gillett W."/>
            <person name="Gu J."/>
            <person name="Hao B."/>
            <person name="Haugen E."/>
            <person name="Havlak P."/>
            <person name="He X."/>
            <person name="Hennig S."/>
            <person name="Hu S."/>
            <person name="Huang W."/>
            <person name="Jackson L.R."/>
            <person name="Jacob L.S."/>
            <person name="Kelly S.H."/>
            <person name="Kube M."/>
            <person name="Levy R."/>
            <person name="Li Z."/>
            <person name="Liu B."/>
            <person name="Liu J."/>
            <person name="Liu W."/>
            <person name="Lu J."/>
            <person name="Maheshwari M."/>
            <person name="Nguyen B.-V."/>
            <person name="Okwuonu G.O."/>
            <person name="Palmeiri A."/>
            <person name="Pasternak S."/>
            <person name="Perez L.M."/>
            <person name="Phelps K.A."/>
            <person name="Plopper F.J."/>
            <person name="Qiang B."/>
            <person name="Raymond C."/>
            <person name="Rodriguez R."/>
            <person name="Saenphimmachak C."/>
            <person name="Santibanez J."/>
            <person name="Shen H."/>
            <person name="Shen Y."/>
            <person name="Subramanian S."/>
            <person name="Tabor P.E."/>
            <person name="Verduzco D."/>
            <person name="Waldron L."/>
            <person name="Wang J."/>
            <person name="Wang J."/>
            <person name="Wang Q."/>
            <person name="Williams G.A."/>
            <person name="Wong G.K.-S."/>
            <person name="Yao Z."/>
            <person name="Zhang J."/>
            <person name="Zhang X."/>
            <person name="Zhao G."/>
            <person name="Zhou J."/>
            <person name="Zhou Y."/>
            <person name="Nelson D."/>
            <person name="Lehrach H."/>
            <person name="Reinhardt R."/>
            <person name="Naylor S.L."/>
            <person name="Yang H."/>
            <person name="Olson M."/>
            <person name="Weinstock G."/>
            <person name="Gibbs R.A."/>
        </authorList>
    </citation>
    <scope>NUCLEOTIDE SEQUENCE [LARGE SCALE GENOMIC DNA]</scope>
</reference>
<reference key="5">
    <citation type="submission" date="2005-07" db="EMBL/GenBank/DDBJ databases">
        <authorList>
            <person name="Mural R.J."/>
            <person name="Istrail S."/>
            <person name="Sutton G."/>
            <person name="Florea L."/>
            <person name="Halpern A.L."/>
            <person name="Mobarry C.M."/>
            <person name="Lippert R."/>
            <person name="Walenz B."/>
            <person name="Shatkay H."/>
            <person name="Dew I."/>
            <person name="Miller J.R."/>
            <person name="Flanigan M.J."/>
            <person name="Edwards N.J."/>
            <person name="Bolanos R."/>
            <person name="Fasulo D."/>
            <person name="Halldorsson B.V."/>
            <person name="Hannenhalli S."/>
            <person name="Turner R."/>
            <person name="Yooseph S."/>
            <person name="Lu F."/>
            <person name="Nusskern D.R."/>
            <person name="Shue B.C."/>
            <person name="Zheng X.H."/>
            <person name="Zhong F."/>
            <person name="Delcher A.L."/>
            <person name="Huson D.H."/>
            <person name="Kravitz S.A."/>
            <person name="Mouchard L."/>
            <person name="Reinert K."/>
            <person name="Remington K.A."/>
            <person name="Clark A.G."/>
            <person name="Waterman M.S."/>
            <person name="Eichler E.E."/>
            <person name="Adams M.D."/>
            <person name="Hunkapiller M.W."/>
            <person name="Myers E.W."/>
            <person name="Venter J.C."/>
        </authorList>
    </citation>
    <scope>NUCLEOTIDE SEQUENCE [LARGE SCALE GENOMIC DNA]</scope>
</reference>
<reference key="6">
    <citation type="journal article" date="2004" name="Genome Res.">
        <title>The status, quality, and expansion of the NIH full-length cDNA project: the Mammalian Gene Collection (MGC).</title>
        <authorList>
            <consortium name="The MGC Project Team"/>
        </authorList>
    </citation>
    <scope>NUCLEOTIDE SEQUENCE [LARGE SCALE MRNA] (ISOFORMS 1 AND 2)</scope>
    <source>
        <tissue>Blood</tissue>
        <tissue>Brain</tissue>
        <tissue>Ovary</tissue>
    </source>
</reference>
<reference key="7">
    <citation type="submission" date="2001-02" db="EMBL/GenBank/DDBJ databases">
        <title>Taurine transporter expression in various organs.</title>
        <authorList>
            <person name="Kim H.W."/>
            <person name="An H.S."/>
            <person name="Park T.S."/>
            <person name="Park K.K."/>
        </authorList>
    </citation>
    <scope>NUCLEOTIDE SEQUENCE [MRNA] OF 81-324</scope>
</reference>
<reference key="8">
    <citation type="journal article" date="2009" name="Nat. Biotechnol.">
        <title>Mass-spectrometric identification and relative quantification of N-linked cell surface glycoproteins.</title>
        <authorList>
            <person name="Wollscheid B."/>
            <person name="Bausch-Fluck D."/>
            <person name="Henderson C."/>
            <person name="O'Brien R."/>
            <person name="Bibel M."/>
            <person name="Schiess R."/>
            <person name="Aebersold R."/>
            <person name="Watts J.D."/>
        </authorList>
    </citation>
    <scope>GLYCOSYLATION [LARGE SCALE ANALYSIS] AT ASN-190</scope>
    <source>
        <tissue>Leukemic T-cell</tissue>
    </source>
</reference>
<reference key="9">
    <citation type="journal article" date="2019" name="FASEB J.">
        <title>Biallelic mutation of human SLC6A6 encoding the taurine transporter TAUT is linked to early retinal degeneration.</title>
        <authorList>
            <person name="Preising M.N."/>
            <person name="Goerg B."/>
            <person name="Friedburg C."/>
            <person name="Qvartskhava N."/>
            <person name="Budde B.S."/>
            <person name="Bonus M."/>
            <person name="Toliat M.R."/>
            <person name="Pfleger C."/>
            <person name="Altmueller J."/>
            <person name="Herebian D."/>
            <person name="Beyer M."/>
            <person name="Zoellner H.J."/>
            <person name="Wittsack H.J."/>
            <person name="Schaper J."/>
            <person name="Klee D."/>
            <person name="Zechner U."/>
            <person name="Nuernberg P."/>
            <person name="Schipper J."/>
            <person name="Schnitzler A."/>
            <person name="Gohlke H."/>
            <person name="Lorenz B."/>
            <person name="Haeussinger D."/>
            <person name="Bolz H.J."/>
        </authorList>
    </citation>
    <scope>INVOLVEMENT IN HTRDC</scope>
    <scope>FUNCTION</scope>
    <scope>VARIANT HTRDC GLU-78</scope>
    <scope>CHARACTERIZATION OF VARIANT HTRDC GLU-78</scope>
    <scope>TRANSPORTER ACTIVITY</scope>
    <scope>SUBCELLULAR LOCATION</scope>
</reference>
<reference key="10">
    <citation type="journal article" date="2020" name="Hum. Mol. Genet.">
        <title>Taurine treatment of retinal degeneration and cardiomyopathy in a consanguineous family with SLC6A6 taurine transporter deficiency.</title>
        <authorList>
            <person name="Ansar M."/>
            <person name="Ranza E."/>
            <person name="Shetty M."/>
            <person name="Paracha S.A."/>
            <person name="Azam M."/>
            <person name="Kern I."/>
            <person name="Iwaszkiewicz J."/>
            <person name="Farooq O."/>
            <person name="Pournaras C.J."/>
            <person name="Malcles A."/>
            <person name="Kecik M."/>
            <person name="Rivolta C."/>
            <person name="Muzaffar W."/>
            <person name="Qurban A."/>
            <person name="Ali L."/>
            <person name="Aggoun Y."/>
            <person name="Santoni F.A."/>
            <person name="Makrythanasis P."/>
            <person name="Ahmed J."/>
            <person name="Qamar R."/>
            <person name="Sarwar M.T."/>
            <person name="Henry L.K."/>
            <person name="Antonarakis S.E."/>
        </authorList>
    </citation>
    <scope>INVOLVEMENT IN HTRDC</scope>
    <scope>FUNCTION</scope>
    <scope>SUBCELLULAR LOCATION</scope>
    <scope>VARIANT HTRDC VAL-399</scope>
    <scope>CHARACTERIZATION OF VARIANT HTRDC VAL-399</scope>
    <scope>TRANSPORTER ACTIVITY</scope>
    <scope>BIOPHYSICOCHEMICAL PROPERTIES</scope>
</reference>
<evidence type="ECO:0000250" key="1">
    <source>
        <dbReference type="UniProtKB" id="O35316"/>
    </source>
</evidence>
<evidence type="ECO:0000250" key="2">
    <source>
        <dbReference type="UniProtKB" id="Q00589"/>
    </source>
</evidence>
<evidence type="ECO:0000255" key="3"/>
<evidence type="ECO:0000256" key="4">
    <source>
        <dbReference type="SAM" id="MobiDB-lite"/>
    </source>
</evidence>
<evidence type="ECO:0000269" key="5">
    <source>
    </source>
</evidence>
<evidence type="ECO:0000269" key="6">
    <source>
    </source>
</evidence>
<evidence type="ECO:0000269" key="7">
    <source>
    </source>
</evidence>
<evidence type="ECO:0000269" key="8">
    <source>
    </source>
</evidence>
<evidence type="ECO:0000269" key="9">
    <source>
    </source>
</evidence>
<evidence type="ECO:0000269" key="10">
    <source>
    </source>
</evidence>
<evidence type="ECO:0000303" key="11">
    <source>
    </source>
</evidence>
<evidence type="ECO:0000305" key="12"/>
<evidence type="ECO:0000305" key="13">
    <source>
    </source>
</evidence>
<evidence type="ECO:0000305" key="14">
    <source>
    </source>
</evidence>
<comment type="function">
    <text evidence="1 6 7 8 9 10">Mediates sodium- and chloride-dependent transport of taurine (PubMed:31345061, PubMed:31903486, PubMed:8010975, PubMed:8382624, PubMed:8654117). Mediates transport of beta-alanine (PubMed:8010975). Can also mediate transport of hypotaurine and gamma-aminobutyric acid (GABA) (By similarity).</text>
</comment>
<comment type="function">
    <text evidence="6 7 9">Sodium-dependent taurine and beta-alanine transporter. Chloride ions are necessary for optimal uptake.</text>
</comment>
<comment type="catalytic activity">
    <reaction evidence="1">
        <text>4-aminobutanoate(out) + chloride(out) + 2 Na(+)(out) = 4-aminobutanoate(in) + chloride(in) + 2 Na(+)(in)</text>
        <dbReference type="Rhea" id="RHEA:70687"/>
        <dbReference type="ChEBI" id="CHEBI:17996"/>
        <dbReference type="ChEBI" id="CHEBI:29101"/>
        <dbReference type="ChEBI" id="CHEBI:59888"/>
    </reaction>
    <physiologicalReaction direction="left-to-right" evidence="1">
        <dbReference type="Rhea" id="RHEA:70688"/>
    </physiologicalReaction>
</comment>
<comment type="catalytic activity">
    <reaction evidence="6 7 8 9 10">
        <text>taurine(out) + chloride(out) + 2 Na(+)(out) = taurine(in) + chloride(in) + 2 Na(+)(in)</text>
        <dbReference type="Rhea" id="RHEA:71223"/>
        <dbReference type="ChEBI" id="CHEBI:17996"/>
        <dbReference type="ChEBI" id="CHEBI:29101"/>
        <dbReference type="ChEBI" id="CHEBI:507393"/>
    </reaction>
    <physiologicalReaction direction="left-to-right" evidence="14">
        <dbReference type="Rhea" id="RHEA:71224"/>
    </physiologicalReaction>
</comment>
<comment type="catalytic activity">
    <reaction evidence="8">
        <text>beta-alanine(out) + chloride(out) + 2 Na(+)(out) = beta-alanine(in) + chloride(in) + 2 Na(+)(in)</text>
        <dbReference type="Rhea" id="RHEA:71247"/>
        <dbReference type="ChEBI" id="CHEBI:17996"/>
        <dbReference type="ChEBI" id="CHEBI:29101"/>
        <dbReference type="ChEBI" id="CHEBI:57966"/>
    </reaction>
    <physiologicalReaction direction="left-to-right" evidence="13">
        <dbReference type="Rhea" id="RHEA:71248"/>
    </physiologicalReaction>
</comment>
<comment type="catalytic activity">
    <reaction evidence="1">
        <text>hypotaurine(out) + chloride(out) + 2 Na(+)(out) = hypotaurine(in) + chloride(in) + 2 Na(+)(in)</text>
        <dbReference type="Rhea" id="RHEA:71243"/>
        <dbReference type="ChEBI" id="CHEBI:17996"/>
        <dbReference type="ChEBI" id="CHEBI:29101"/>
        <dbReference type="ChEBI" id="CHEBI:57853"/>
    </reaction>
    <physiologicalReaction direction="left-to-right" evidence="1">
        <dbReference type="Rhea" id="RHEA:71244"/>
    </physiologicalReaction>
</comment>
<comment type="activity regulation">
    <text evidence="8 9 10">Taurine transport activity is stimulated by thyrotropin (PubMed:8382624). Taurine transport activity is inhibited by GABA, hypotaurine and beta-alanine (PubMed:8010975, PubMed:8654117).</text>
</comment>
<comment type="biophysicochemical properties">
    <kinetics>
        <KM evidence="8">5.9 uM for taurine</KM>
        <KM evidence="10">2 uM for taurine</KM>
        <KM evidence="7">3.8 uM for taurine</KM>
    </kinetics>
</comment>
<comment type="subcellular location">
    <subcellularLocation>
        <location evidence="6 7">Cell membrane</location>
        <topology evidence="3">Multi-pass membrane protein</topology>
    </subcellularLocation>
</comment>
<comment type="alternative products">
    <event type="alternative splicing"/>
    <isoform>
        <id>P31641-1</id>
        <name>1</name>
        <sequence type="displayed"/>
    </isoform>
    <isoform>
        <id>P31641-2</id>
        <name>2</name>
        <sequence type="described" ref="VSP_044961"/>
    </isoform>
</comment>
<comment type="tissue specificity">
    <text evidence="8 9">Expressed abundantly in placenta and skeletal muscle, at intermediate levels in heart, brain, lung, kidney and pancreas and at low levels in liver.</text>
</comment>
<comment type="PTM">
    <text evidence="2">Taurine transport activity is down-regulated upon Ser-322 phosphorylation.</text>
</comment>
<comment type="disease" evidence="6 7">
    <disease id="DI-06123">
        <name>Hypotaurinemic retinal degeneration and cardiomyopathy</name>
        <acronym>HTRDC</acronym>
        <description>An autosomal recessive disorder characterized by low plasma taurine, childhood-onset progressive retinal degeneration, and cardiomyopathy.</description>
        <dbReference type="MIM" id="145350"/>
    </disease>
    <text>The disease is caused by variants affecting the gene represented in this entry.</text>
</comment>
<comment type="similarity">
    <text evidence="12">Belongs to the sodium:neurotransmitter symporter (SNF) (TC 2.A.22) family. SLC6A6 subfamily.</text>
</comment>
<protein>
    <recommendedName>
        <fullName>Sodium- and chloride-dependent taurine transporter</fullName>
    </recommendedName>
    <alternativeName>
        <fullName>Solute carrier family 6 member 6</fullName>
    </alternativeName>
</protein>
<dbReference type="EMBL" id="Z18956">
    <property type="protein sequence ID" value="CAA79481.1"/>
    <property type="molecule type" value="mRNA"/>
</dbReference>
<dbReference type="EMBL" id="U16120">
    <property type="protein sequence ID" value="AAA50842.1"/>
    <property type="molecule type" value="mRNA"/>
</dbReference>
<dbReference type="EMBL" id="U09220">
    <property type="protein sequence ID" value="AAC50443.1"/>
    <property type="molecule type" value="mRNA"/>
</dbReference>
<dbReference type="EMBL" id="AC090941">
    <property type="status" value="NOT_ANNOTATED_CDS"/>
    <property type="molecule type" value="Genomic_DNA"/>
</dbReference>
<dbReference type="EMBL" id="AC090952">
    <property type="status" value="NOT_ANNOTATED_CDS"/>
    <property type="molecule type" value="Genomic_DNA"/>
</dbReference>
<dbReference type="EMBL" id="AC093496">
    <property type="status" value="NOT_ANNOTATED_CDS"/>
    <property type="molecule type" value="Genomic_DNA"/>
</dbReference>
<dbReference type="EMBL" id="CH471055">
    <property type="protein sequence ID" value="EAW64192.1"/>
    <property type="molecule type" value="Genomic_DNA"/>
</dbReference>
<dbReference type="EMBL" id="BC006252">
    <property type="protein sequence ID" value="AAH06252.1"/>
    <property type="molecule type" value="mRNA"/>
</dbReference>
<dbReference type="EMBL" id="BC111489">
    <property type="protein sequence ID" value="AAI11490.1"/>
    <property type="molecule type" value="mRNA"/>
</dbReference>
<dbReference type="EMBL" id="BC137128">
    <property type="protein sequence ID" value="AAI37129.1"/>
    <property type="molecule type" value="mRNA"/>
</dbReference>
<dbReference type="EMBL" id="BC137129">
    <property type="protein sequence ID" value="AAI37130.1"/>
    <property type="molecule type" value="mRNA"/>
</dbReference>
<dbReference type="EMBL" id="AF346763">
    <property type="protein sequence ID" value="AAK30132.1"/>
    <property type="molecule type" value="mRNA"/>
</dbReference>
<dbReference type="CCDS" id="CCDS33705.1">
    <molecule id="P31641-1"/>
</dbReference>
<dbReference type="CCDS" id="CCDS46765.1">
    <molecule id="P31641-2"/>
</dbReference>
<dbReference type="PIR" id="G01426">
    <property type="entry name" value="G01426"/>
</dbReference>
<dbReference type="PIR" id="S29839">
    <property type="entry name" value="S29839"/>
</dbReference>
<dbReference type="PIR" id="S46487">
    <property type="entry name" value="S46487"/>
</dbReference>
<dbReference type="RefSeq" id="NP_001127839.2">
    <property type="nucleotide sequence ID" value="NM_001134367.3"/>
</dbReference>
<dbReference type="RefSeq" id="NP_001127840.1">
    <molecule id="P31641-2"/>
    <property type="nucleotide sequence ID" value="NM_001134368.4"/>
</dbReference>
<dbReference type="RefSeq" id="NP_003034.2">
    <molecule id="P31641-1"/>
    <property type="nucleotide sequence ID" value="NM_003043.6"/>
</dbReference>
<dbReference type="RefSeq" id="XP_011532332.1">
    <molecule id="P31641-1"/>
    <property type="nucleotide sequence ID" value="XM_011534030.2"/>
</dbReference>
<dbReference type="PDB" id="9K7B">
    <property type="method" value="EM"/>
    <property type="resolution" value="2.75 A"/>
    <property type="chains" value="A=1-620"/>
</dbReference>
<dbReference type="PDB" id="9K7N">
    <property type="method" value="EM"/>
    <property type="resolution" value="3.30 A"/>
    <property type="chains" value="A=1-620"/>
</dbReference>
<dbReference type="PDBsum" id="9K7B"/>
<dbReference type="PDBsum" id="9K7N"/>
<dbReference type="EMDB" id="EMD-62147"/>
<dbReference type="EMDB" id="EMD-62150"/>
<dbReference type="SMR" id="P31641"/>
<dbReference type="BioGRID" id="112424">
    <property type="interactions" value="45"/>
</dbReference>
<dbReference type="FunCoup" id="P31641">
    <property type="interactions" value="223"/>
</dbReference>
<dbReference type="IntAct" id="P31641">
    <property type="interactions" value="17"/>
</dbReference>
<dbReference type="MINT" id="P31641"/>
<dbReference type="STRING" id="9606.ENSP00000481625"/>
<dbReference type="BindingDB" id="P31641"/>
<dbReference type="ChEMBL" id="CHEMBL5762"/>
<dbReference type="DrugBank" id="DB01956">
    <property type="generic name" value="Taurine"/>
</dbReference>
<dbReference type="TCDB" id="2.A.22.3.3">
    <property type="family name" value="the neurotransmitter:sodium symporter (nss) family"/>
</dbReference>
<dbReference type="GlyCosmos" id="P31641">
    <property type="glycosylation" value="3 sites, No reported glycans"/>
</dbReference>
<dbReference type="GlyGen" id="P31641">
    <property type="glycosylation" value="4 sites, 2 N-linked glycans (2 sites)"/>
</dbReference>
<dbReference type="iPTMnet" id="P31641"/>
<dbReference type="PhosphoSitePlus" id="P31641"/>
<dbReference type="SwissPalm" id="P31641"/>
<dbReference type="BioMuta" id="SLC6A6"/>
<dbReference type="DMDM" id="1352535"/>
<dbReference type="jPOST" id="P31641"/>
<dbReference type="MassIVE" id="P31641"/>
<dbReference type="PaxDb" id="9606-ENSP00000480890"/>
<dbReference type="PeptideAtlas" id="P31641"/>
<dbReference type="ProteomicsDB" id="54796">
    <molecule id="P31641-1"/>
</dbReference>
<dbReference type="ProteomicsDB" id="78766"/>
<dbReference type="Pumba" id="P31641"/>
<dbReference type="Antibodypedia" id="10999">
    <property type="antibodies" value="181 antibodies from 26 providers"/>
</dbReference>
<dbReference type="DNASU" id="6533"/>
<dbReference type="Ensembl" id="ENST00000621751.4">
    <molecule id="P31641-2"/>
    <property type="protein sequence ID" value="ENSP00000482560.1"/>
    <property type="gene ID" value="ENSG00000131389.18"/>
</dbReference>
<dbReference type="Ensembl" id="ENST00000622186.5">
    <molecule id="P31641-1"/>
    <property type="protein sequence ID" value="ENSP00000480890.1"/>
    <property type="gene ID" value="ENSG00000131389.18"/>
</dbReference>
<dbReference type="GeneID" id="6533"/>
<dbReference type="KEGG" id="hsa:6533"/>
<dbReference type="MANE-Select" id="ENST00000622186.5">
    <property type="protein sequence ID" value="ENSP00000480890.1"/>
    <property type="RefSeq nucleotide sequence ID" value="NM_003043.6"/>
    <property type="RefSeq protein sequence ID" value="NP_003034.2"/>
</dbReference>
<dbReference type="UCSC" id="uc032rfd.2">
    <molecule id="P31641-1"/>
    <property type="organism name" value="human"/>
</dbReference>
<dbReference type="AGR" id="HGNC:11052"/>
<dbReference type="CTD" id="6533"/>
<dbReference type="DisGeNET" id="6533"/>
<dbReference type="GeneCards" id="SLC6A6"/>
<dbReference type="HGNC" id="HGNC:11052">
    <property type="gene designation" value="SLC6A6"/>
</dbReference>
<dbReference type="HPA" id="ENSG00000131389">
    <property type="expression patterns" value="Tissue enhanced (retina)"/>
</dbReference>
<dbReference type="MalaCards" id="SLC6A6"/>
<dbReference type="MIM" id="145350">
    <property type="type" value="phenotype"/>
</dbReference>
<dbReference type="MIM" id="186854">
    <property type="type" value="gene"/>
</dbReference>
<dbReference type="neXtProt" id="NX_P31641"/>
<dbReference type="OpenTargets" id="ENSG00000131389"/>
<dbReference type="PharmGKB" id="PA35912"/>
<dbReference type="VEuPathDB" id="HostDB:ENSG00000131389"/>
<dbReference type="eggNOG" id="KOG3660">
    <property type="taxonomic scope" value="Eukaryota"/>
</dbReference>
<dbReference type="GeneTree" id="ENSGT00940000154583"/>
<dbReference type="HOGENOM" id="CLU_006855_9_5_1"/>
<dbReference type="InParanoid" id="P31641"/>
<dbReference type="OMA" id="WAHCNHT"/>
<dbReference type="OrthoDB" id="6581954at2759"/>
<dbReference type="PAN-GO" id="P31641">
    <property type="GO annotations" value="4 GO annotations based on evolutionary models"/>
</dbReference>
<dbReference type="PhylomeDB" id="P31641"/>
<dbReference type="TreeFam" id="TF343812"/>
<dbReference type="PathwayCommons" id="P31641"/>
<dbReference type="Reactome" id="R-HSA-352230">
    <property type="pathway name" value="Amino acid transport across the plasma membrane"/>
</dbReference>
<dbReference type="Reactome" id="R-HSA-442660">
    <property type="pathway name" value="Na+/Cl- dependent neurotransmitter transporters"/>
</dbReference>
<dbReference type="SignaLink" id="P31641"/>
<dbReference type="BioGRID-ORCS" id="6533">
    <property type="hits" value="16 hits in 1171 CRISPR screens"/>
</dbReference>
<dbReference type="ChiTaRS" id="SLC6A6">
    <property type="organism name" value="human"/>
</dbReference>
<dbReference type="GeneWiki" id="SLC6A6"/>
<dbReference type="GenomeRNAi" id="6533"/>
<dbReference type="Pharos" id="P31641">
    <property type="development level" value="Tbio"/>
</dbReference>
<dbReference type="PRO" id="PR:P31641"/>
<dbReference type="Proteomes" id="UP000005640">
    <property type="component" value="Chromosome 3"/>
</dbReference>
<dbReference type="RNAct" id="P31641">
    <property type="molecule type" value="protein"/>
</dbReference>
<dbReference type="Bgee" id="ENSG00000131389">
    <property type="expression patterns" value="Expressed in mucosa of paranasal sinus and 178 other cell types or tissues"/>
</dbReference>
<dbReference type="ExpressionAtlas" id="P31641">
    <property type="expression patterns" value="baseline and differential"/>
</dbReference>
<dbReference type="GO" id="GO:0016324">
    <property type="term" value="C:apical plasma membrane"/>
    <property type="evidence" value="ECO:0000314"/>
    <property type="project" value="ARUK-UCL"/>
</dbReference>
<dbReference type="GO" id="GO:0016323">
    <property type="term" value="C:basolateral plasma membrane"/>
    <property type="evidence" value="ECO:0000314"/>
    <property type="project" value="ARUK-UCL"/>
</dbReference>
<dbReference type="GO" id="GO:0042995">
    <property type="term" value="C:cell projection"/>
    <property type="evidence" value="ECO:0000318"/>
    <property type="project" value="GO_Central"/>
</dbReference>
<dbReference type="GO" id="GO:0030425">
    <property type="term" value="C:dendrite"/>
    <property type="evidence" value="ECO:0000250"/>
    <property type="project" value="ARUK-UCL"/>
</dbReference>
<dbReference type="GO" id="GO:0098982">
    <property type="term" value="C:GABA-ergic synapse"/>
    <property type="evidence" value="ECO:0007669"/>
    <property type="project" value="Ensembl"/>
</dbReference>
<dbReference type="GO" id="GO:0016020">
    <property type="term" value="C:membrane"/>
    <property type="evidence" value="ECO:0000304"/>
    <property type="project" value="ProtInc"/>
</dbReference>
<dbReference type="GO" id="GO:0031528">
    <property type="term" value="C:microvillus membrane"/>
    <property type="evidence" value="ECO:0000314"/>
    <property type="project" value="ARUK-UCL"/>
</dbReference>
<dbReference type="GO" id="GO:0043025">
    <property type="term" value="C:neuronal cell body"/>
    <property type="evidence" value="ECO:0000250"/>
    <property type="project" value="ARUK-UCL"/>
</dbReference>
<dbReference type="GO" id="GO:0005886">
    <property type="term" value="C:plasma membrane"/>
    <property type="evidence" value="ECO:0000314"/>
    <property type="project" value="UniProtKB"/>
</dbReference>
<dbReference type="GO" id="GO:0045211">
    <property type="term" value="C:postsynaptic membrane"/>
    <property type="evidence" value="ECO:0007669"/>
    <property type="project" value="Ensembl"/>
</dbReference>
<dbReference type="GO" id="GO:0022858">
    <property type="term" value="F:alanine transmembrane transporter activity"/>
    <property type="evidence" value="ECO:0000314"/>
    <property type="project" value="ARUK-UCL"/>
</dbReference>
<dbReference type="GO" id="GO:0015171">
    <property type="term" value="F:amino acid transmembrane transporter activity"/>
    <property type="evidence" value="ECO:0000314"/>
    <property type="project" value="ARUK-UCL"/>
</dbReference>
<dbReference type="GO" id="GO:0005283">
    <property type="term" value="F:amino acid:sodium symporter activity"/>
    <property type="evidence" value="ECO:0000314"/>
    <property type="project" value="UniProtKB"/>
</dbReference>
<dbReference type="GO" id="GO:0015185">
    <property type="term" value="F:gamma-aminobutyric acid transmembrane transporter activity"/>
    <property type="evidence" value="ECO:0000250"/>
    <property type="project" value="ARUK-UCL"/>
</dbReference>
<dbReference type="GO" id="GO:0005332">
    <property type="term" value="F:gamma-aminobutyric acid:sodium:chloride symporter activity"/>
    <property type="evidence" value="ECO:0000250"/>
    <property type="project" value="UniProtKB"/>
</dbReference>
<dbReference type="GO" id="GO:0005368">
    <property type="term" value="F:taurine transmembrane transporter activity"/>
    <property type="evidence" value="ECO:0000314"/>
    <property type="project" value="UniProtKB"/>
</dbReference>
<dbReference type="GO" id="GO:0005369">
    <property type="term" value="F:taurine:sodium symporter activity"/>
    <property type="evidence" value="ECO:0000314"/>
    <property type="project" value="UniProtKB"/>
</dbReference>
<dbReference type="GO" id="GO:0032328">
    <property type="term" value="P:alanine transport"/>
    <property type="evidence" value="ECO:0000314"/>
    <property type="project" value="ARUK-UCL"/>
</dbReference>
<dbReference type="GO" id="GO:0089718">
    <property type="term" value="P:amino acid import across plasma membrane"/>
    <property type="evidence" value="ECO:0000314"/>
    <property type="project" value="ARUK-UCL"/>
</dbReference>
<dbReference type="GO" id="GO:0006865">
    <property type="term" value="P:amino acid transport"/>
    <property type="evidence" value="ECO:0000318"/>
    <property type="project" value="GO_Central"/>
</dbReference>
<dbReference type="GO" id="GO:0051939">
    <property type="term" value="P:gamma-aminobutyric acid import"/>
    <property type="evidence" value="ECO:0000250"/>
    <property type="project" value="ARUK-UCL"/>
</dbReference>
<dbReference type="GO" id="GO:0098739">
    <property type="term" value="P:import across plasma membrane"/>
    <property type="evidence" value="ECO:0000250"/>
    <property type="project" value="ARUK-UCL"/>
</dbReference>
<dbReference type="GO" id="GO:0050804">
    <property type="term" value="P:modulation of chemical synaptic transmission"/>
    <property type="evidence" value="ECO:0007669"/>
    <property type="project" value="Ensembl"/>
</dbReference>
<dbReference type="GO" id="GO:0006836">
    <property type="term" value="P:neurotransmitter transport"/>
    <property type="evidence" value="ECO:0007669"/>
    <property type="project" value="UniProtKB-KW"/>
</dbReference>
<dbReference type="GO" id="GO:0045597">
    <property type="term" value="P:positive regulation of cell differentiation"/>
    <property type="evidence" value="ECO:0000315"/>
    <property type="project" value="ARUK-UCL"/>
</dbReference>
<dbReference type="GO" id="GO:0035725">
    <property type="term" value="P:sodium ion transmembrane transport"/>
    <property type="evidence" value="ECO:0000318"/>
    <property type="project" value="GO_Central"/>
</dbReference>
<dbReference type="GO" id="GO:0015734">
    <property type="term" value="P:taurine transmembrane transport"/>
    <property type="evidence" value="ECO:0000314"/>
    <property type="project" value="UniProtKB"/>
</dbReference>
<dbReference type="GO" id="GO:0150104">
    <property type="term" value="P:transport across blood-brain barrier"/>
    <property type="evidence" value="ECO:0000303"/>
    <property type="project" value="ARUK-UCL"/>
</dbReference>
<dbReference type="CDD" id="cd11510">
    <property type="entry name" value="SLC6sbd_TauT"/>
    <property type="match status" value="1"/>
</dbReference>
<dbReference type="InterPro" id="IPR000175">
    <property type="entry name" value="Na/ntran_symport"/>
</dbReference>
<dbReference type="InterPro" id="IPR002434">
    <property type="entry name" value="Na/ntran_symport_taurine"/>
</dbReference>
<dbReference type="InterPro" id="IPR037272">
    <property type="entry name" value="SNS_sf"/>
</dbReference>
<dbReference type="PANTHER" id="PTHR11616:SF141">
    <property type="entry name" value="SODIUM- AND CHLORIDE-DEPENDENT TAURINE TRANSPORTER"/>
    <property type="match status" value="1"/>
</dbReference>
<dbReference type="PANTHER" id="PTHR11616">
    <property type="entry name" value="SODIUM/CHLORIDE DEPENDENT TRANSPORTER"/>
    <property type="match status" value="1"/>
</dbReference>
<dbReference type="Pfam" id="PF00209">
    <property type="entry name" value="SNF"/>
    <property type="match status" value="1"/>
</dbReference>
<dbReference type="PRINTS" id="PR00176">
    <property type="entry name" value="NANEUSMPORT"/>
</dbReference>
<dbReference type="PRINTS" id="PR01200">
    <property type="entry name" value="TAUTRANSPORT"/>
</dbReference>
<dbReference type="SUPFAM" id="SSF161070">
    <property type="entry name" value="SNF-like"/>
    <property type="match status" value="1"/>
</dbReference>
<dbReference type="PROSITE" id="PS00610">
    <property type="entry name" value="NA_NEUROTRAN_SYMP_1"/>
    <property type="match status" value="1"/>
</dbReference>
<dbReference type="PROSITE" id="PS00754">
    <property type="entry name" value="NA_NEUROTRAN_SYMP_2"/>
    <property type="match status" value="1"/>
</dbReference>
<dbReference type="PROSITE" id="PS50267">
    <property type="entry name" value="NA_NEUROTRAN_SYMP_3"/>
    <property type="match status" value="1"/>
</dbReference>
<accession>P31641</accession>
<accession>B2RNU7</accession>
<accession>Q9BRI2</accession>
<accession>Q9BXB0</accession>
<sequence>MATKEKLQCLKDFHKDILKPSPGKSPGTRPEDEAEGKPPQREKWSSKIDFVLSVAGGFVGLGNVWRFPYLCYKNGGGAFLIPYFIFLFGSGLPVFFLEIIIGQYTSEGGITCWEKICPLFSGIGYASVVIVSLLNVYYIVILAWATYYLFQSFQKELPWAHCNHSWNTPHCMEDTMRKNKSVWITISSTNFTSPVIEFWERNVLSLSPGIDHPGSLKWDLALCLLLVWLVCFFCIWKGVRSTGKVVYFTATFPFAMLLVLLVRGLTLPGAGAGIKFYLYPDITRLEDPQVWIDAGTQIFFSYAICLGAMTSLGSYNKYKYNSYRDCMLLGCLNSGTSFVSGFAIFSILGFMAQEQGVDIADVAESGPGLAFIAYPKAVTMMPLPTFWSILFFIMLLLLGLDSQFVEVEGQITSLVDLYPSFLRKGYRREIFIAFVCSISYLLGLTMVTEGGMYVFQLFDYYAASGVCLLWVAFFECFVIAWIYGGDNLYDGIEDMIGYRPGPWMKYSWAVITPVLCVGCFIFSLVKYVPLTYNKTYVYPNWAIGLGWSLALSSMLCVPLVIVIRLCQTEGPFLVRVKYLLTPREPNRWAVEREGATPYNSRTVMNGALVKPTHIIVETMM</sequence>
<keyword id="KW-0002">3D-structure</keyword>
<keyword id="KW-0025">Alternative splicing</keyword>
<keyword id="KW-0122">Cardiomyopathy</keyword>
<keyword id="KW-1003">Cell membrane</keyword>
<keyword id="KW-0225">Disease variant</keyword>
<keyword id="KW-0325">Glycoprotein</keyword>
<keyword id="KW-0472">Membrane</keyword>
<keyword id="KW-0532">Neurotransmitter transport</keyword>
<keyword id="KW-0597">Phosphoprotein</keyword>
<keyword id="KW-1267">Proteomics identification</keyword>
<keyword id="KW-1185">Reference proteome</keyword>
<keyword id="KW-0769">Symport</keyword>
<keyword id="KW-0812">Transmembrane</keyword>
<keyword id="KW-1133">Transmembrane helix</keyword>
<keyword id="KW-0813">Transport</keyword>